<protein>
    <recommendedName>
        <fullName evidence="1">Thymidylate synthase</fullName>
        <shortName evidence="1">TS</shortName>
        <shortName evidence="1">TSase</shortName>
        <ecNumber evidence="1">2.1.1.45</ecNumber>
    </recommendedName>
</protein>
<keyword id="KW-0963">Cytoplasm</keyword>
<keyword id="KW-0489">Methyltransferase</keyword>
<keyword id="KW-0545">Nucleotide biosynthesis</keyword>
<keyword id="KW-1185">Reference proteome</keyword>
<keyword id="KW-0808">Transferase</keyword>
<dbReference type="EC" id="2.1.1.45" evidence="1"/>
<dbReference type="EMBL" id="CP000510">
    <property type="protein sequence ID" value="ABM02361.1"/>
    <property type="molecule type" value="Genomic_DNA"/>
</dbReference>
<dbReference type="RefSeq" id="WP_011768920.1">
    <property type="nucleotide sequence ID" value="NC_008709.1"/>
</dbReference>
<dbReference type="SMR" id="A1SS96"/>
<dbReference type="STRING" id="357804.Ping_0506"/>
<dbReference type="KEGG" id="pin:Ping_0506"/>
<dbReference type="eggNOG" id="COG0207">
    <property type="taxonomic scope" value="Bacteria"/>
</dbReference>
<dbReference type="HOGENOM" id="CLU_021669_0_1_6"/>
<dbReference type="OrthoDB" id="9774633at2"/>
<dbReference type="UniPathway" id="UPA00575"/>
<dbReference type="Proteomes" id="UP000000639">
    <property type="component" value="Chromosome"/>
</dbReference>
<dbReference type="GO" id="GO:0005829">
    <property type="term" value="C:cytosol"/>
    <property type="evidence" value="ECO:0007669"/>
    <property type="project" value="TreeGrafter"/>
</dbReference>
<dbReference type="GO" id="GO:0004799">
    <property type="term" value="F:thymidylate synthase activity"/>
    <property type="evidence" value="ECO:0007669"/>
    <property type="project" value="UniProtKB-UniRule"/>
</dbReference>
<dbReference type="GO" id="GO:0006231">
    <property type="term" value="P:dTMP biosynthetic process"/>
    <property type="evidence" value="ECO:0007669"/>
    <property type="project" value="UniProtKB-UniRule"/>
</dbReference>
<dbReference type="GO" id="GO:0006235">
    <property type="term" value="P:dTTP biosynthetic process"/>
    <property type="evidence" value="ECO:0007669"/>
    <property type="project" value="UniProtKB-UniRule"/>
</dbReference>
<dbReference type="GO" id="GO:0032259">
    <property type="term" value="P:methylation"/>
    <property type="evidence" value="ECO:0007669"/>
    <property type="project" value="UniProtKB-KW"/>
</dbReference>
<dbReference type="CDD" id="cd00351">
    <property type="entry name" value="TS_Pyrimidine_HMase"/>
    <property type="match status" value="1"/>
</dbReference>
<dbReference type="Gene3D" id="3.30.572.10">
    <property type="entry name" value="Thymidylate synthase/dCMP hydroxymethylase domain"/>
    <property type="match status" value="1"/>
</dbReference>
<dbReference type="HAMAP" id="MF_00008">
    <property type="entry name" value="Thymidy_synth_bact"/>
    <property type="match status" value="1"/>
</dbReference>
<dbReference type="InterPro" id="IPR045097">
    <property type="entry name" value="Thymidate_synth/dCMP_Mease"/>
</dbReference>
<dbReference type="InterPro" id="IPR023451">
    <property type="entry name" value="Thymidate_synth/dCMP_Mease_dom"/>
</dbReference>
<dbReference type="InterPro" id="IPR036926">
    <property type="entry name" value="Thymidate_synth/dCMP_Mease_sf"/>
</dbReference>
<dbReference type="InterPro" id="IPR000398">
    <property type="entry name" value="Thymidylate_synthase"/>
</dbReference>
<dbReference type="InterPro" id="IPR020940">
    <property type="entry name" value="Thymidylate_synthase_AS"/>
</dbReference>
<dbReference type="NCBIfam" id="NF002498">
    <property type="entry name" value="PRK01827.1-4"/>
    <property type="match status" value="1"/>
</dbReference>
<dbReference type="NCBIfam" id="TIGR03284">
    <property type="entry name" value="thym_sym"/>
    <property type="match status" value="1"/>
</dbReference>
<dbReference type="PANTHER" id="PTHR11548:SF9">
    <property type="entry name" value="THYMIDYLATE SYNTHASE"/>
    <property type="match status" value="1"/>
</dbReference>
<dbReference type="PANTHER" id="PTHR11548">
    <property type="entry name" value="THYMIDYLATE SYNTHASE 1"/>
    <property type="match status" value="1"/>
</dbReference>
<dbReference type="Pfam" id="PF00303">
    <property type="entry name" value="Thymidylat_synt"/>
    <property type="match status" value="1"/>
</dbReference>
<dbReference type="PRINTS" id="PR00108">
    <property type="entry name" value="THYMDSNTHASE"/>
</dbReference>
<dbReference type="SUPFAM" id="SSF55831">
    <property type="entry name" value="Thymidylate synthase/dCMP hydroxymethylase"/>
    <property type="match status" value="1"/>
</dbReference>
<dbReference type="PROSITE" id="PS00091">
    <property type="entry name" value="THYMIDYLATE_SYNTHASE"/>
    <property type="match status" value="1"/>
</dbReference>
<gene>
    <name evidence="1" type="primary">thyA</name>
    <name type="ordered locus">Ping_0506</name>
</gene>
<comment type="function">
    <text evidence="1">Catalyzes the reductive methylation of 2'-deoxyuridine-5'-monophosphate (dUMP) to 2'-deoxythymidine-5'-monophosphate (dTMP) while utilizing 5,10-methylenetetrahydrofolate (mTHF) as the methyl donor and reductant in the reaction, yielding dihydrofolate (DHF) as a by-product. This enzymatic reaction provides an intracellular de novo source of dTMP, an essential precursor for DNA biosynthesis.</text>
</comment>
<comment type="catalytic activity">
    <reaction evidence="1">
        <text>dUMP + (6R)-5,10-methylene-5,6,7,8-tetrahydrofolate = 7,8-dihydrofolate + dTMP</text>
        <dbReference type="Rhea" id="RHEA:12104"/>
        <dbReference type="ChEBI" id="CHEBI:15636"/>
        <dbReference type="ChEBI" id="CHEBI:57451"/>
        <dbReference type="ChEBI" id="CHEBI:63528"/>
        <dbReference type="ChEBI" id="CHEBI:246422"/>
        <dbReference type="EC" id="2.1.1.45"/>
    </reaction>
</comment>
<comment type="pathway">
    <text evidence="1">Pyrimidine metabolism; dTTP biosynthesis.</text>
</comment>
<comment type="subunit">
    <text evidence="1">Homodimer.</text>
</comment>
<comment type="subcellular location">
    <subcellularLocation>
        <location evidence="1">Cytoplasm</location>
    </subcellularLocation>
</comment>
<comment type="similarity">
    <text evidence="1">Belongs to the thymidylate synthase family. Bacterial-type ThyA subfamily.</text>
</comment>
<feature type="chain" id="PRO_1000000655" description="Thymidylate synthase">
    <location>
        <begin position="1"/>
        <end position="283"/>
    </location>
</feature>
<feature type="active site" description="Nucleophile" evidence="1">
    <location>
        <position position="160"/>
    </location>
</feature>
<feature type="binding site" evidence="1">
    <location>
        <position position="22"/>
    </location>
    <ligand>
        <name>dUMP</name>
        <dbReference type="ChEBI" id="CHEBI:246422"/>
    </ligand>
</feature>
<feature type="binding site" evidence="1">
    <location>
        <begin position="180"/>
        <end position="183"/>
    </location>
    <ligand>
        <name>dUMP</name>
        <dbReference type="ChEBI" id="CHEBI:246422"/>
    </ligand>
</feature>
<feature type="binding site" evidence="1">
    <location>
        <position position="183"/>
    </location>
    <ligand>
        <name>(6R)-5,10-methylene-5,6,7,8-tetrahydrofolate</name>
        <dbReference type="ChEBI" id="CHEBI:15636"/>
    </ligand>
</feature>
<feature type="binding site" evidence="1">
    <location>
        <position position="191"/>
    </location>
    <ligand>
        <name>dUMP</name>
        <dbReference type="ChEBI" id="CHEBI:246422"/>
    </ligand>
</feature>
<feature type="binding site" evidence="1">
    <location>
        <begin position="221"/>
        <end position="223"/>
    </location>
    <ligand>
        <name>dUMP</name>
        <dbReference type="ChEBI" id="CHEBI:246422"/>
    </ligand>
</feature>
<feature type="binding site" evidence="1">
    <location>
        <position position="282"/>
    </location>
    <ligand>
        <name>(6R)-5,10-methylene-5,6,7,8-tetrahydrofolate</name>
        <dbReference type="ChEBI" id="CHEBI:15636"/>
    </ligand>
</feature>
<reference key="1">
    <citation type="journal article" date="2008" name="BMC Genomics">
        <title>Genomics of an extreme psychrophile, Psychromonas ingrahamii.</title>
        <authorList>
            <person name="Riley M."/>
            <person name="Staley J.T."/>
            <person name="Danchin A."/>
            <person name="Wang T.Z."/>
            <person name="Brettin T.S."/>
            <person name="Hauser L.J."/>
            <person name="Land M.L."/>
            <person name="Thompson L.S."/>
        </authorList>
    </citation>
    <scope>NUCLEOTIDE SEQUENCE [LARGE SCALE GENOMIC DNA]</scope>
    <source>
        <strain>DSM 17664 / CCUG 51855 / 37</strain>
    </source>
</reference>
<proteinExistence type="inferred from homology"/>
<sequence length="283" mass="32251">MKQYLGLCQRIVDKGIWIENQRTGKRCLTVINADLEYDVGNNQFPMITTRKSFYKSAIAELIGYLRGYDNAADFRKLGTKTWDANSNLNNAWLNNPYRKGEDDMGRVYGIQGRSWAKPDGGFIDQLKKVVDDLSNGIDDRGEIVTFYNPGEFEMGCLRPCMHTHTFSLLGDTLHLTSYQRSCDVPLGLNFNQVQVFALLALMAQITGKKAGMAYHKIVNAHIYEDQLALMRDVQLPRLPFASPQLKINPKIKSLQDLETWVTMDDFEVEGYQCHDAIKYPFSV</sequence>
<name>TYSY_PSYIN</name>
<organism>
    <name type="scientific">Psychromonas ingrahamii (strain DSM 17664 / CCUG 51855 / 37)</name>
    <dbReference type="NCBI Taxonomy" id="357804"/>
    <lineage>
        <taxon>Bacteria</taxon>
        <taxon>Pseudomonadati</taxon>
        <taxon>Pseudomonadota</taxon>
        <taxon>Gammaproteobacteria</taxon>
        <taxon>Alteromonadales</taxon>
        <taxon>Psychromonadaceae</taxon>
        <taxon>Psychromonas</taxon>
    </lineage>
</organism>
<accession>A1SS96</accession>
<evidence type="ECO:0000255" key="1">
    <source>
        <dbReference type="HAMAP-Rule" id="MF_00008"/>
    </source>
</evidence>